<proteinExistence type="inferred from homology"/>
<protein>
    <recommendedName>
        <fullName>NADH-ubiquinone oxidoreductase chain 6</fullName>
        <ecNumber evidence="1">7.1.1.2</ecNumber>
    </recommendedName>
    <alternativeName>
        <fullName>NADH dehydrogenase subunit 6</fullName>
    </alternativeName>
</protein>
<accession>Q96070</accession>
<name>NU6M_RHIUN</name>
<gene>
    <name type="primary">MT-ND6</name>
    <name type="synonym">MTND6</name>
    <name type="synonym">NADH6</name>
    <name type="synonym">ND6</name>
</gene>
<feature type="chain" id="PRO_0000118329" description="NADH-ubiquinone oxidoreductase chain 6">
    <location>
        <begin position="1"/>
        <end position="175"/>
    </location>
</feature>
<feature type="transmembrane region" description="Helical" evidence="3">
    <location>
        <begin position="1"/>
        <end position="21"/>
    </location>
</feature>
<feature type="transmembrane region" description="Helical" evidence="3">
    <location>
        <begin position="25"/>
        <end position="45"/>
    </location>
</feature>
<feature type="transmembrane region" description="Helical" evidence="3">
    <location>
        <begin position="47"/>
        <end position="67"/>
    </location>
</feature>
<feature type="transmembrane region" description="Helical" evidence="3">
    <location>
        <begin position="88"/>
        <end position="108"/>
    </location>
</feature>
<feature type="transmembrane region" description="Helical" evidence="3">
    <location>
        <begin position="149"/>
        <end position="169"/>
    </location>
</feature>
<reference key="1">
    <citation type="journal article" date="1996" name="Mol. Biol. Evol.">
        <title>The complete mitochondrial DNA sequence of the greater Indian rhinoceros, Rhinoceros unicornis, and the Phylogenetic relationship among Carnivora, Perissodactyla, and Artiodactyla (+ Cetacea).</title>
        <authorList>
            <person name="Xu X."/>
            <person name="Janke A."/>
            <person name="Arnason U."/>
        </authorList>
    </citation>
    <scope>NUCLEOTIDE SEQUENCE [GENOMIC DNA]</scope>
    <source>
        <tissue>Kidney</tissue>
    </source>
</reference>
<organism>
    <name type="scientific">Rhinoceros unicornis</name>
    <name type="common">Greater Indian rhinoceros</name>
    <dbReference type="NCBI Taxonomy" id="9809"/>
    <lineage>
        <taxon>Eukaryota</taxon>
        <taxon>Metazoa</taxon>
        <taxon>Chordata</taxon>
        <taxon>Craniata</taxon>
        <taxon>Vertebrata</taxon>
        <taxon>Euteleostomi</taxon>
        <taxon>Mammalia</taxon>
        <taxon>Eutheria</taxon>
        <taxon>Laurasiatheria</taxon>
        <taxon>Perissodactyla</taxon>
        <taxon>Rhinocerotidae</taxon>
        <taxon>Rhinoceros</taxon>
    </lineage>
</organism>
<geneLocation type="mitochondrion"/>
<sequence length="175" mass="18734">MMIYIGFILSIVFVISFVGFSSKPSPIYGGLVLIVSGGVGCGIVMSFGGSFLGLMVFLIYLGGMLVVFGYTTAMATEQYPEVWVSNATVLSTFILGVLMEAMLVLYMFKNGEVEVVFEFSGMGDWVVCDGGDSGVFNEEIVGVSALYSYGVWIIIVTGWSLFVGVLVVLEVTRGA</sequence>
<keyword id="KW-0249">Electron transport</keyword>
<keyword id="KW-0472">Membrane</keyword>
<keyword id="KW-0496">Mitochondrion</keyword>
<keyword id="KW-0999">Mitochondrion inner membrane</keyword>
<keyword id="KW-0520">NAD</keyword>
<keyword id="KW-0679">Respiratory chain</keyword>
<keyword id="KW-1278">Translocase</keyword>
<keyword id="KW-0812">Transmembrane</keyword>
<keyword id="KW-1133">Transmembrane helix</keyword>
<keyword id="KW-0813">Transport</keyword>
<keyword id="KW-0830">Ubiquinone</keyword>
<evidence type="ECO:0000250" key="1">
    <source>
        <dbReference type="UniProtKB" id="P03923"/>
    </source>
</evidence>
<evidence type="ECO:0000250" key="2">
    <source>
        <dbReference type="UniProtKB" id="P03924"/>
    </source>
</evidence>
<evidence type="ECO:0000255" key="3"/>
<evidence type="ECO:0000305" key="4"/>
<comment type="function">
    <text evidence="1">Core subunit of the mitochondrial membrane respiratory chain NADH dehydrogenase (Complex I) which catalyzes electron transfer from NADH through the respiratory chain, using ubiquinone as an electron acceptor. Essential for the catalytic activity and assembly of complex I.</text>
</comment>
<comment type="catalytic activity">
    <reaction evidence="1">
        <text>a ubiquinone + NADH + 5 H(+)(in) = a ubiquinol + NAD(+) + 4 H(+)(out)</text>
        <dbReference type="Rhea" id="RHEA:29091"/>
        <dbReference type="Rhea" id="RHEA-COMP:9565"/>
        <dbReference type="Rhea" id="RHEA-COMP:9566"/>
        <dbReference type="ChEBI" id="CHEBI:15378"/>
        <dbReference type="ChEBI" id="CHEBI:16389"/>
        <dbReference type="ChEBI" id="CHEBI:17976"/>
        <dbReference type="ChEBI" id="CHEBI:57540"/>
        <dbReference type="ChEBI" id="CHEBI:57945"/>
        <dbReference type="EC" id="7.1.1.2"/>
    </reaction>
</comment>
<comment type="subunit">
    <text evidence="2">Core subunit of respiratory chain NADH dehydrogenase (Complex I) which is composed of 45 different subunits.</text>
</comment>
<comment type="subcellular location">
    <subcellularLocation>
        <location evidence="2">Mitochondrion inner membrane</location>
        <topology evidence="3">Multi-pass membrane protein</topology>
    </subcellularLocation>
</comment>
<comment type="similarity">
    <text evidence="4">Belongs to the complex I subunit 6 family.</text>
</comment>
<dbReference type="EC" id="7.1.1.2" evidence="1"/>
<dbReference type="EMBL" id="X97336">
    <property type="protein sequence ID" value="CAA66012.1"/>
    <property type="molecule type" value="Genomic_DNA"/>
</dbReference>
<dbReference type="PIR" id="T11258">
    <property type="entry name" value="T11258"/>
</dbReference>
<dbReference type="RefSeq" id="NP_007379.1">
    <property type="nucleotide sequence ID" value="NC_001779.1"/>
</dbReference>
<dbReference type="SMR" id="Q96070"/>
<dbReference type="GeneID" id="808050"/>
<dbReference type="CTD" id="4541"/>
<dbReference type="GO" id="GO:0005743">
    <property type="term" value="C:mitochondrial inner membrane"/>
    <property type="evidence" value="ECO:0000250"/>
    <property type="project" value="UniProtKB"/>
</dbReference>
<dbReference type="GO" id="GO:0008137">
    <property type="term" value="F:NADH dehydrogenase (ubiquinone) activity"/>
    <property type="evidence" value="ECO:0000250"/>
    <property type="project" value="UniProtKB"/>
</dbReference>
<dbReference type="GO" id="GO:0006120">
    <property type="term" value="P:mitochondrial electron transport, NADH to ubiquinone"/>
    <property type="evidence" value="ECO:0000250"/>
    <property type="project" value="UniProtKB"/>
</dbReference>
<dbReference type="GO" id="GO:0032981">
    <property type="term" value="P:mitochondrial respiratory chain complex I assembly"/>
    <property type="evidence" value="ECO:0000250"/>
    <property type="project" value="UniProtKB"/>
</dbReference>
<dbReference type="Gene3D" id="1.20.120.1200">
    <property type="entry name" value="NADH-ubiquinone/plastoquinone oxidoreductase chain 6, subunit NuoJ"/>
    <property type="match status" value="1"/>
</dbReference>
<dbReference type="InterPro" id="IPR050269">
    <property type="entry name" value="ComplexI_Subunit6"/>
</dbReference>
<dbReference type="InterPro" id="IPR001457">
    <property type="entry name" value="NADH_UbQ/plastoQ_OxRdtase_su6"/>
</dbReference>
<dbReference type="InterPro" id="IPR042106">
    <property type="entry name" value="Nuo/plastoQ_OxRdtase_6_NuoJ"/>
</dbReference>
<dbReference type="PANTHER" id="PTHR11435">
    <property type="entry name" value="NADH UBIQUINONE OXIDOREDUCTASE SUBUNIT ND6"/>
    <property type="match status" value="1"/>
</dbReference>
<dbReference type="PANTHER" id="PTHR11435:SF1">
    <property type="entry name" value="NADH-UBIQUINONE OXIDOREDUCTASE CHAIN 6"/>
    <property type="match status" value="1"/>
</dbReference>
<dbReference type="Pfam" id="PF00499">
    <property type="entry name" value="Oxidored_q3"/>
    <property type="match status" value="1"/>
</dbReference>